<gene>
    <name evidence="1" type="primary">ybeY</name>
    <name type="ordered locus">Mmc1_1438</name>
</gene>
<sequence>MVQATLRLESQWPASPAFGWALAPLEVSVLLSDDEAVQALNAQYRGKDKPTNILSFAMEEEADDAMPMPIMAGEPRLLGDLILAYQTVQREAAEQDKPFDQHLTHLLVHGTLHLLGYDHERSEDEAQQQEAREIAILAQLGLPNPYL</sequence>
<evidence type="ECO:0000255" key="1">
    <source>
        <dbReference type="HAMAP-Rule" id="MF_00009"/>
    </source>
</evidence>
<reference key="1">
    <citation type="journal article" date="2009" name="Appl. Environ. Microbiol.">
        <title>Complete genome sequence of the chemolithoautotrophic marine magnetotactic coccus strain MC-1.</title>
        <authorList>
            <person name="Schubbe S."/>
            <person name="Williams T.J."/>
            <person name="Xie G."/>
            <person name="Kiss H.E."/>
            <person name="Brettin T.S."/>
            <person name="Martinez D."/>
            <person name="Ross C.A."/>
            <person name="Schuler D."/>
            <person name="Cox B.L."/>
            <person name="Nealson K.H."/>
            <person name="Bazylinski D.A."/>
        </authorList>
    </citation>
    <scope>NUCLEOTIDE SEQUENCE [LARGE SCALE GENOMIC DNA]</scope>
    <source>
        <strain>ATCC BAA-1437 / JCM 17883 / MC-1</strain>
    </source>
</reference>
<organism>
    <name type="scientific">Magnetococcus marinus (strain ATCC BAA-1437 / JCM 17883 / MC-1)</name>
    <dbReference type="NCBI Taxonomy" id="156889"/>
    <lineage>
        <taxon>Bacteria</taxon>
        <taxon>Pseudomonadati</taxon>
        <taxon>Pseudomonadota</taxon>
        <taxon>Alphaproteobacteria</taxon>
        <taxon>Magnetococcales</taxon>
        <taxon>Magnetococcaceae</taxon>
        <taxon>Magnetococcus</taxon>
    </lineage>
</organism>
<comment type="function">
    <text evidence="1">Single strand-specific metallo-endoribonuclease involved in late-stage 70S ribosome quality control and in maturation of the 3' terminus of the 16S rRNA.</text>
</comment>
<comment type="cofactor">
    <cofactor evidence="1">
        <name>Zn(2+)</name>
        <dbReference type="ChEBI" id="CHEBI:29105"/>
    </cofactor>
    <text evidence="1">Binds 1 zinc ion.</text>
</comment>
<comment type="subcellular location">
    <subcellularLocation>
        <location evidence="1">Cytoplasm</location>
    </subcellularLocation>
</comment>
<comment type="similarity">
    <text evidence="1">Belongs to the endoribonuclease YbeY family.</text>
</comment>
<proteinExistence type="inferred from homology"/>
<dbReference type="EC" id="3.1.-.-" evidence="1"/>
<dbReference type="EMBL" id="CP000471">
    <property type="protein sequence ID" value="ABK43949.1"/>
    <property type="molecule type" value="Genomic_DNA"/>
</dbReference>
<dbReference type="RefSeq" id="WP_011713102.1">
    <property type="nucleotide sequence ID" value="NC_008576.1"/>
</dbReference>
<dbReference type="SMR" id="A0L7K6"/>
<dbReference type="STRING" id="156889.Mmc1_1438"/>
<dbReference type="KEGG" id="mgm:Mmc1_1438"/>
<dbReference type="eggNOG" id="COG0319">
    <property type="taxonomic scope" value="Bacteria"/>
</dbReference>
<dbReference type="HOGENOM" id="CLU_106710_0_0_5"/>
<dbReference type="OrthoDB" id="9807740at2"/>
<dbReference type="Proteomes" id="UP000002586">
    <property type="component" value="Chromosome"/>
</dbReference>
<dbReference type="GO" id="GO:0005737">
    <property type="term" value="C:cytoplasm"/>
    <property type="evidence" value="ECO:0007669"/>
    <property type="project" value="UniProtKB-SubCell"/>
</dbReference>
<dbReference type="GO" id="GO:0004222">
    <property type="term" value="F:metalloendopeptidase activity"/>
    <property type="evidence" value="ECO:0007669"/>
    <property type="project" value="InterPro"/>
</dbReference>
<dbReference type="GO" id="GO:0004521">
    <property type="term" value="F:RNA endonuclease activity"/>
    <property type="evidence" value="ECO:0007669"/>
    <property type="project" value="UniProtKB-UniRule"/>
</dbReference>
<dbReference type="GO" id="GO:0008270">
    <property type="term" value="F:zinc ion binding"/>
    <property type="evidence" value="ECO:0007669"/>
    <property type="project" value="UniProtKB-UniRule"/>
</dbReference>
<dbReference type="GO" id="GO:0006364">
    <property type="term" value="P:rRNA processing"/>
    <property type="evidence" value="ECO:0007669"/>
    <property type="project" value="UniProtKB-UniRule"/>
</dbReference>
<dbReference type="Gene3D" id="3.40.390.30">
    <property type="entry name" value="Metalloproteases ('zincins'), catalytic domain"/>
    <property type="match status" value="1"/>
</dbReference>
<dbReference type="HAMAP" id="MF_00009">
    <property type="entry name" value="Endoribonucl_YbeY"/>
    <property type="match status" value="1"/>
</dbReference>
<dbReference type="InterPro" id="IPR023091">
    <property type="entry name" value="MetalPrtase_cat_dom_sf_prd"/>
</dbReference>
<dbReference type="InterPro" id="IPR002036">
    <property type="entry name" value="YbeY"/>
</dbReference>
<dbReference type="InterPro" id="IPR020549">
    <property type="entry name" value="YbeY_CS"/>
</dbReference>
<dbReference type="NCBIfam" id="TIGR00043">
    <property type="entry name" value="rRNA maturation RNase YbeY"/>
    <property type="match status" value="1"/>
</dbReference>
<dbReference type="PANTHER" id="PTHR46986">
    <property type="entry name" value="ENDORIBONUCLEASE YBEY, CHLOROPLASTIC"/>
    <property type="match status" value="1"/>
</dbReference>
<dbReference type="PANTHER" id="PTHR46986:SF1">
    <property type="entry name" value="ENDORIBONUCLEASE YBEY, CHLOROPLASTIC"/>
    <property type="match status" value="1"/>
</dbReference>
<dbReference type="Pfam" id="PF02130">
    <property type="entry name" value="YbeY"/>
    <property type="match status" value="1"/>
</dbReference>
<dbReference type="SUPFAM" id="SSF55486">
    <property type="entry name" value="Metalloproteases ('zincins'), catalytic domain"/>
    <property type="match status" value="1"/>
</dbReference>
<dbReference type="PROSITE" id="PS01306">
    <property type="entry name" value="UPF0054"/>
    <property type="match status" value="1"/>
</dbReference>
<name>YBEY_MAGMM</name>
<accession>A0L7K6</accession>
<feature type="chain" id="PRO_0000284236" description="Endoribonuclease YbeY">
    <location>
        <begin position="1"/>
        <end position="147"/>
    </location>
</feature>
<feature type="binding site" evidence="1">
    <location>
        <position position="109"/>
    </location>
    <ligand>
        <name>Zn(2+)</name>
        <dbReference type="ChEBI" id="CHEBI:29105"/>
        <note>catalytic</note>
    </ligand>
</feature>
<feature type="binding site" evidence="1">
    <location>
        <position position="113"/>
    </location>
    <ligand>
        <name>Zn(2+)</name>
        <dbReference type="ChEBI" id="CHEBI:29105"/>
        <note>catalytic</note>
    </ligand>
</feature>
<feature type="binding site" evidence="1">
    <location>
        <position position="119"/>
    </location>
    <ligand>
        <name>Zn(2+)</name>
        <dbReference type="ChEBI" id="CHEBI:29105"/>
        <note>catalytic</note>
    </ligand>
</feature>
<protein>
    <recommendedName>
        <fullName evidence="1">Endoribonuclease YbeY</fullName>
        <ecNumber evidence="1">3.1.-.-</ecNumber>
    </recommendedName>
</protein>
<keyword id="KW-0963">Cytoplasm</keyword>
<keyword id="KW-0255">Endonuclease</keyword>
<keyword id="KW-0378">Hydrolase</keyword>
<keyword id="KW-0479">Metal-binding</keyword>
<keyword id="KW-0540">Nuclease</keyword>
<keyword id="KW-1185">Reference proteome</keyword>
<keyword id="KW-0690">Ribosome biogenesis</keyword>
<keyword id="KW-0698">rRNA processing</keyword>
<keyword id="KW-0862">Zinc</keyword>